<keyword id="KW-0021">Allosteric enzyme</keyword>
<keyword id="KW-0963">Cytoplasm</keyword>
<keyword id="KW-0378">Hydrolase</keyword>
<keyword id="KW-0479">Metal-binding</keyword>
<keyword id="KW-0645">Protease</keyword>
<keyword id="KW-0915">Sodium</keyword>
<keyword id="KW-0888">Threonine protease</keyword>
<feature type="chain" id="PRO_1000100866" description="ATP-dependent protease subunit HslV">
    <location>
        <begin position="1"/>
        <end position="173"/>
    </location>
</feature>
<feature type="active site" evidence="1">
    <location>
        <position position="2"/>
    </location>
</feature>
<feature type="binding site" evidence="1">
    <location>
        <position position="158"/>
    </location>
    <ligand>
        <name>Na(+)</name>
        <dbReference type="ChEBI" id="CHEBI:29101"/>
    </ligand>
</feature>
<feature type="binding site" evidence="1">
    <location>
        <position position="161"/>
    </location>
    <ligand>
        <name>Na(+)</name>
        <dbReference type="ChEBI" id="CHEBI:29101"/>
    </ligand>
</feature>
<feature type="binding site" evidence="1">
    <location>
        <position position="164"/>
    </location>
    <ligand>
        <name>Na(+)</name>
        <dbReference type="ChEBI" id="CHEBI:29101"/>
    </ligand>
</feature>
<evidence type="ECO:0000255" key="1">
    <source>
        <dbReference type="HAMAP-Rule" id="MF_00248"/>
    </source>
</evidence>
<comment type="function">
    <text evidence="1">Protease subunit of a proteasome-like degradation complex believed to be a general protein degrading machinery.</text>
</comment>
<comment type="catalytic activity">
    <reaction evidence="1">
        <text>ATP-dependent cleavage of peptide bonds with broad specificity.</text>
        <dbReference type="EC" id="3.4.25.2"/>
    </reaction>
</comment>
<comment type="activity regulation">
    <text evidence="1">Allosterically activated by HslU binding.</text>
</comment>
<comment type="subunit">
    <text evidence="1">A double ring-shaped homohexamer of HslV is capped on each side by a ring-shaped HslU homohexamer. The assembly of the HslU/HslV complex is dependent on binding of ATP.</text>
</comment>
<comment type="subcellular location">
    <subcellularLocation>
        <location evidence="1">Cytoplasm</location>
    </subcellularLocation>
</comment>
<comment type="similarity">
    <text evidence="1">Belongs to the peptidase T1B family. HslV subfamily.</text>
</comment>
<proteinExistence type="inferred from homology"/>
<sequence>MTTIVCVRKDGKVAIGGDGQATLGNCVEKGTVRKVRRMYKDKVVTGFAGSTADAFILRDLFEKKLELHQGHLIKSAVELAKEWRTERSLRKLEAMMIVANESEFLLVSGSGDVIEPEQDVLAIGSGGNYAKAAALALLRTENNLSAKEIVAEALKIAGDIDIYSNHNHVIEEV</sequence>
<organism>
    <name type="scientific">Actinobacillus pleuropneumoniae serotype 7 (strain AP76)</name>
    <dbReference type="NCBI Taxonomy" id="537457"/>
    <lineage>
        <taxon>Bacteria</taxon>
        <taxon>Pseudomonadati</taxon>
        <taxon>Pseudomonadota</taxon>
        <taxon>Gammaproteobacteria</taxon>
        <taxon>Pasteurellales</taxon>
        <taxon>Pasteurellaceae</taxon>
        <taxon>Actinobacillus</taxon>
    </lineage>
</organism>
<reference key="1">
    <citation type="submission" date="2008-06" db="EMBL/GenBank/DDBJ databases">
        <title>Genome and proteome analysis of A. pleuropneumoniae serotype 7.</title>
        <authorList>
            <person name="Linke B."/>
            <person name="Buettner F."/>
            <person name="Martinez-Arias R."/>
            <person name="Goesmann A."/>
            <person name="Baltes N."/>
            <person name="Tegetmeyer H."/>
            <person name="Singh M."/>
            <person name="Gerlach G.F."/>
        </authorList>
    </citation>
    <scope>NUCLEOTIDE SEQUENCE [LARGE SCALE GENOMIC DNA]</scope>
    <source>
        <strain>AP76</strain>
    </source>
</reference>
<dbReference type="EC" id="3.4.25.2" evidence="1"/>
<dbReference type="EMBL" id="CP001091">
    <property type="protein sequence ID" value="ACE62449.1"/>
    <property type="molecule type" value="Genomic_DNA"/>
</dbReference>
<dbReference type="RefSeq" id="WP_005618211.1">
    <property type="nucleotide sequence ID" value="NC_010939.1"/>
</dbReference>
<dbReference type="SMR" id="B3GYW3"/>
<dbReference type="MEROPS" id="T01.006"/>
<dbReference type="KEGG" id="apa:APP7_1797"/>
<dbReference type="HOGENOM" id="CLU_093872_1_0_6"/>
<dbReference type="Proteomes" id="UP000001226">
    <property type="component" value="Chromosome"/>
</dbReference>
<dbReference type="GO" id="GO:0009376">
    <property type="term" value="C:HslUV protease complex"/>
    <property type="evidence" value="ECO:0007669"/>
    <property type="project" value="UniProtKB-UniRule"/>
</dbReference>
<dbReference type="GO" id="GO:0005839">
    <property type="term" value="C:proteasome core complex"/>
    <property type="evidence" value="ECO:0007669"/>
    <property type="project" value="InterPro"/>
</dbReference>
<dbReference type="GO" id="GO:0046872">
    <property type="term" value="F:metal ion binding"/>
    <property type="evidence" value="ECO:0007669"/>
    <property type="project" value="UniProtKB-KW"/>
</dbReference>
<dbReference type="GO" id="GO:0004298">
    <property type="term" value="F:threonine-type endopeptidase activity"/>
    <property type="evidence" value="ECO:0007669"/>
    <property type="project" value="UniProtKB-KW"/>
</dbReference>
<dbReference type="GO" id="GO:0051603">
    <property type="term" value="P:proteolysis involved in protein catabolic process"/>
    <property type="evidence" value="ECO:0007669"/>
    <property type="project" value="InterPro"/>
</dbReference>
<dbReference type="CDD" id="cd01913">
    <property type="entry name" value="protease_HslV"/>
    <property type="match status" value="1"/>
</dbReference>
<dbReference type="FunFam" id="3.60.20.10:FF:000002">
    <property type="entry name" value="ATP-dependent protease subunit HslV"/>
    <property type="match status" value="1"/>
</dbReference>
<dbReference type="Gene3D" id="3.60.20.10">
    <property type="entry name" value="Glutamine Phosphoribosylpyrophosphate, subunit 1, domain 1"/>
    <property type="match status" value="1"/>
</dbReference>
<dbReference type="HAMAP" id="MF_00248">
    <property type="entry name" value="HslV"/>
    <property type="match status" value="1"/>
</dbReference>
<dbReference type="InterPro" id="IPR022281">
    <property type="entry name" value="ATP-dep_Prtase_HsIV_su"/>
</dbReference>
<dbReference type="InterPro" id="IPR029055">
    <property type="entry name" value="Ntn_hydrolases_N"/>
</dbReference>
<dbReference type="InterPro" id="IPR001353">
    <property type="entry name" value="Proteasome_sua/b"/>
</dbReference>
<dbReference type="InterPro" id="IPR023333">
    <property type="entry name" value="Proteasome_suB-type"/>
</dbReference>
<dbReference type="NCBIfam" id="TIGR03692">
    <property type="entry name" value="ATP_dep_HslV"/>
    <property type="match status" value="1"/>
</dbReference>
<dbReference type="NCBIfam" id="NF003964">
    <property type="entry name" value="PRK05456.1"/>
    <property type="match status" value="1"/>
</dbReference>
<dbReference type="PANTHER" id="PTHR32194:SF0">
    <property type="entry name" value="ATP-DEPENDENT PROTEASE SUBUNIT HSLV"/>
    <property type="match status" value="1"/>
</dbReference>
<dbReference type="PANTHER" id="PTHR32194">
    <property type="entry name" value="METALLOPROTEASE TLDD"/>
    <property type="match status" value="1"/>
</dbReference>
<dbReference type="Pfam" id="PF00227">
    <property type="entry name" value="Proteasome"/>
    <property type="match status" value="1"/>
</dbReference>
<dbReference type="PIRSF" id="PIRSF039093">
    <property type="entry name" value="HslV"/>
    <property type="match status" value="1"/>
</dbReference>
<dbReference type="SUPFAM" id="SSF56235">
    <property type="entry name" value="N-terminal nucleophile aminohydrolases (Ntn hydrolases)"/>
    <property type="match status" value="1"/>
</dbReference>
<dbReference type="PROSITE" id="PS51476">
    <property type="entry name" value="PROTEASOME_BETA_2"/>
    <property type="match status" value="1"/>
</dbReference>
<name>HSLV_ACTP7</name>
<protein>
    <recommendedName>
        <fullName evidence="1">ATP-dependent protease subunit HslV</fullName>
        <ecNumber evidence="1">3.4.25.2</ecNumber>
    </recommendedName>
</protein>
<accession>B3GYW3</accession>
<gene>
    <name evidence="1" type="primary">hslV</name>
    <name type="ordered locus">APP7_1797</name>
</gene>